<proteinExistence type="inferred from homology"/>
<feature type="chain" id="PRO_1000148482" description="Cobalt-precorrin-5B C(1)-methyltransferase">
    <location>
        <begin position="1"/>
        <end position="369"/>
    </location>
</feature>
<keyword id="KW-0169">Cobalamin biosynthesis</keyword>
<keyword id="KW-0489">Methyltransferase</keyword>
<keyword id="KW-0949">S-adenosyl-L-methionine</keyword>
<keyword id="KW-0808">Transferase</keyword>
<dbReference type="EC" id="2.1.1.195" evidence="1"/>
<dbReference type="EMBL" id="CP001108">
    <property type="protein sequence ID" value="ACF46311.1"/>
    <property type="molecule type" value="Genomic_DNA"/>
</dbReference>
<dbReference type="RefSeq" id="WP_012505846.1">
    <property type="nucleotide sequence ID" value="NC_011059.1"/>
</dbReference>
<dbReference type="SMR" id="B4S8C4"/>
<dbReference type="STRING" id="290512.Paes_1286"/>
<dbReference type="KEGG" id="paa:Paes_1286"/>
<dbReference type="eggNOG" id="COG1903">
    <property type="taxonomic scope" value="Bacteria"/>
</dbReference>
<dbReference type="HOGENOM" id="CLU_041273_0_0_10"/>
<dbReference type="UniPathway" id="UPA00148">
    <property type="reaction ID" value="UER00227"/>
</dbReference>
<dbReference type="Proteomes" id="UP000002725">
    <property type="component" value="Chromosome"/>
</dbReference>
<dbReference type="GO" id="GO:0043780">
    <property type="term" value="F:cobalt-precorrin-5B C1-methyltransferase activity"/>
    <property type="evidence" value="ECO:0007669"/>
    <property type="project" value="RHEA"/>
</dbReference>
<dbReference type="GO" id="GO:0019251">
    <property type="term" value="P:anaerobic cobalamin biosynthetic process"/>
    <property type="evidence" value="ECO:0007669"/>
    <property type="project" value="UniProtKB-UniRule"/>
</dbReference>
<dbReference type="GO" id="GO:0032259">
    <property type="term" value="P:methylation"/>
    <property type="evidence" value="ECO:0007669"/>
    <property type="project" value="UniProtKB-KW"/>
</dbReference>
<dbReference type="Gene3D" id="3.30.2110.10">
    <property type="entry name" value="CbiD-like"/>
    <property type="match status" value="1"/>
</dbReference>
<dbReference type="HAMAP" id="MF_00787">
    <property type="entry name" value="CbiD"/>
    <property type="match status" value="1"/>
</dbReference>
<dbReference type="InterPro" id="IPR002748">
    <property type="entry name" value="CbiD"/>
</dbReference>
<dbReference type="InterPro" id="IPR036074">
    <property type="entry name" value="CbiD_sf"/>
</dbReference>
<dbReference type="NCBIfam" id="TIGR00312">
    <property type="entry name" value="cbiD"/>
    <property type="match status" value="1"/>
</dbReference>
<dbReference type="NCBIfam" id="NF000849">
    <property type="entry name" value="PRK00075.1-1"/>
    <property type="match status" value="1"/>
</dbReference>
<dbReference type="PANTHER" id="PTHR35863">
    <property type="entry name" value="COBALT-PRECORRIN-5B C(1)-METHYLTRANSFERASE"/>
    <property type="match status" value="1"/>
</dbReference>
<dbReference type="PANTHER" id="PTHR35863:SF1">
    <property type="entry name" value="COBALT-PRECORRIN-5B C(1)-METHYLTRANSFERASE"/>
    <property type="match status" value="1"/>
</dbReference>
<dbReference type="Pfam" id="PF01888">
    <property type="entry name" value="CbiD"/>
    <property type="match status" value="1"/>
</dbReference>
<dbReference type="PIRSF" id="PIRSF026782">
    <property type="entry name" value="CbiD"/>
    <property type="match status" value="1"/>
</dbReference>
<dbReference type="SUPFAM" id="SSF111342">
    <property type="entry name" value="CbiD-like"/>
    <property type="match status" value="1"/>
</dbReference>
<gene>
    <name evidence="1" type="primary">cbiD</name>
    <name type="ordered locus">Paes_1286</name>
</gene>
<name>CBID_PROA2</name>
<protein>
    <recommendedName>
        <fullName evidence="1">Cobalt-precorrin-5B C(1)-methyltransferase</fullName>
        <ecNumber evidence="1">2.1.1.195</ecNumber>
    </recommendedName>
    <alternativeName>
        <fullName evidence="1">Cobalt-precorrin-6A synthase</fullName>
    </alternativeName>
</protein>
<sequence length="369" mass="39366">MTAQKGELRQGYTTGSCATAAARAALHLLLDGQMPERVSITLPDGGSAEFSPEAGRRDAAGASCCVRKDAGDDPDVTNGLLVCCRVALLDDEPEGHIEFCRGEGVGMVTLPGLGIDVGGPAINPVPRSMIREALGGLLDRYGLRCGVQVTVSVPGGEEVARKTLNARVGVKGGISIIGTSGRVIPYSEEAYLESIARTIRVARHSGSTHLVACAGARSEKLLRRMYPDLPETAFIHYGNRVGSTLDMIQHDGGFRNLTVGVMLAKATKLAQGELDLSSRTVGLNPQFIEHLVRKTGYAEDVALEAKALELVRSLVDIVPFSSSEPLYRALAESCRRVCRNRFPSGGLEFVLMTMQDGCILCDEHGCRDV</sequence>
<accession>B4S8C4</accession>
<organism>
    <name type="scientific">Prosthecochloris aestuarii (strain DSM 271 / SK 413)</name>
    <dbReference type="NCBI Taxonomy" id="290512"/>
    <lineage>
        <taxon>Bacteria</taxon>
        <taxon>Pseudomonadati</taxon>
        <taxon>Chlorobiota</taxon>
        <taxon>Chlorobiia</taxon>
        <taxon>Chlorobiales</taxon>
        <taxon>Chlorobiaceae</taxon>
        <taxon>Prosthecochloris</taxon>
    </lineage>
</organism>
<reference key="1">
    <citation type="submission" date="2008-06" db="EMBL/GenBank/DDBJ databases">
        <title>Complete sequence of chromosome of Prosthecochloris aestuarii DSM 271.</title>
        <authorList>
            <consortium name="US DOE Joint Genome Institute"/>
            <person name="Lucas S."/>
            <person name="Copeland A."/>
            <person name="Lapidus A."/>
            <person name="Glavina del Rio T."/>
            <person name="Dalin E."/>
            <person name="Tice H."/>
            <person name="Bruce D."/>
            <person name="Goodwin L."/>
            <person name="Pitluck S."/>
            <person name="Schmutz J."/>
            <person name="Larimer F."/>
            <person name="Land M."/>
            <person name="Hauser L."/>
            <person name="Kyrpides N."/>
            <person name="Anderson I."/>
            <person name="Liu Z."/>
            <person name="Li T."/>
            <person name="Zhao F."/>
            <person name="Overmann J."/>
            <person name="Bryant D.A."/>
            <person name="Richardson P."/>
        </authorList>
    </citation>
    <scope>NUCLEOTIDE SEQUENCE [LARGE SCALE GENOMIC DNA]</scope>
    <source>
        <strain>DSM 271 / SK 413</strain>
    </source>
</reference>
<comment type="function">
    <text evidence="1">Catalyzes the methylation of C-1 in cobalt-precorrin-5B to form cobalt-precorrin-6A.</text>
</comment>
<comment type="catalytic activity">
    <reaction evidence="1">
        <text>Co-precorrin-5B + S-adenosyl-L-methionine = Co-precorrin-6A + S-adenosyl-L-homocysteine</text>
        <dbReference type="Rhea" id="RHEA:26285"/>
        <dbReference type="ChEBI" id="CHEBI:57856"/>
        <dbReference type="ChEBI" id="CHEBI:59789"/>
        <dbReference type="ChEBI" id="CHEBI:60063"/>
        <dbReference type="ChEBI" id="CHEBI:60064"/>
        <dbReference type="EC" id="2.1.1.195"/>
    </reaction>
</comment>
<comment type="pathway">
    <text evidence="1">Cofactor biosynthesis; adenosylcobalamin biosynthesis; cob(II)yrinate a,c-diamide from sirohydrochlorin (anaerobic route): step 6/10.</text>
</comment>
<comment type="similarity">
    <text evidence="1">Belongs to the CbiD family.</text>
</comment>
<evidence type="ECO:0000255" key="1">
    <source>
        <dbReference type="HAMAP-Rule" id="MF_00787"/>
    </source>
</evidence>